<accession>Q52715</accession>
<accession>Q52713</accession>
<gene>
    <name evidence="1 4" type="primary">rnfD</name>
</gene>
<sequence length="358" mass="37817">MHMPVAGPHTHTLFTVSRTMLTVVAALTPATLFGLWEFGWPAIFLFLTTVVSAWVFEVACLKIADKPIRPFATDGSAILSGWLVAMTLPPYAPWWVGVIGSFIAIVIAKHLFGGLGQNLFNPAMVARAMLVVALPVQMTTWIAPVGLLEGPSFLHGLSITFLGSQEFDAVSSASTLSHIKSQISAGATMGEILPTLADLESRLLGFVPGSLGETSTVLLALGGLLLLVTRIITPTIPLAVLGTLVTLSAICSFLAPDRFAPPILHLTSGSTMLCAFFIATDYVTSPVTTAGKWVYGIGIGTLVFVIPLRRLPRGRGLCGALDELGHAPDRNLHPAADLRTVPHRQAACAAKPAKGAQK</sequence>
<name>RNFD_RHOCA</name>
<proteinExistence type="evidence at protein level"/>
<comment type="function">
    <text evidence="1 2">Part of a membrane-bound complex that couples electron transfer with translocation of ions across the membrane (By similarity). Required for nitrogen fixation. Involved in electron transfer to nitrogenase (PubMed:8264535).</text>
</comment>
<comment type="cofactor">
    <cofactor evidence="1">
        <name>FMN</name>
        <dbReference type="ChEBI" id="CHEBI:58210"/>
    </cofactor>
</comment>
<comment type="subunit">
    <text evidence="1 6">The complex is composed of six subunits: RnfA, RnfB, RnfC, RnfD, RnfE and RnfG.</text>
</comment>
<comment type="subcellular location">
    <subcellularLocation>
        <location evidence="1 5">Cellular chromatophore membrane</location>
        <topology evidence="1">Multi-pass membrane protein</topology>
    </subcellularLocation>
</comment>
<comment type="induction">
    <text evidence="3">Expression is reduced under iron-limiting conditions.</text>
</comment>
<comment type="similarity">
    <text evidence="1">Belongs to the NqrB/RnfD family.</text>
</comment>
<keyword id="KW-0249">Electron transport</keyword>
<keyword id="KW-0285">Flavoprotein</keyword>
<keyword id="KW-0288">FMN</keyword>
<keyword id="KW-0472">Membrane</keyword>
<keyword id="KW-0535">Nitrogen fixation</keyword>
<keyword id="KW-0597">Phosphoprotein</keyword>
<keyword id="KW-1278">Translocase</keyword>
<keyword id="KW-0812">Transmembrane</keyword>
<keyword id="KW-1133">Transmembrane helix</keyword>
<keyword id="KW-0813">Transport</keyword>
<dbReference type="EC" id="7.-.-.-" evidence="1 5"/>
<dbReference type="EMBL" id="X72888">
    <property type="protein sequence ID" value="CAA51398.1"/>
    <property type="molecule type" value="Genomic_DNA"/>
</dbReference>
<dbReference type="EMBL" id="Y11913">
    <property type="protein sequence ID" value="CAA72664.1"/>
    <property type="molecule type" value="Genomic_DNA"/>
</dbReference>
<dbReference type="PIR" id="S39892">
    <property type="entry name" value="S39892"/>
</dbReference>
<dbReference type="SMR" id="Q52715"/>
<dbReference type="GO" id="GO:0005886">
    <property type="term" value="C:plasma membrane"/>
    <property type="evidence" value="ECO:0007669"/>
    <property type="project" value="UniProtKB-UniRule"/>
</dbReference>
<dbReference type="GO" id="GO:0042717">
    <property type="term" value="C:plasma membrane-derived chromatophore membrane"/>
    <property type="evidence" value="ECO:0007669"/>
    <property type="project" value="UniProtKB-SubCell"/>
</dbReference>
<dbReference type="GO" id="GO:0022900">
    <property type="term" value="P:electron transport chain"/>
    <property type="evidence" value="ECO:0007669"/>
    <property type="project" value="UniProtKB-UniRule"/>
</dbReference>
<dbReference type="GO" id="GO:0009399">
    <property type="term" value="P:nitrogen fixation"/>
    <property type="evidence" value="ECO:0007669"/>
    <property type="project" value="UniProtKB-KW"/>
</dbReference>
<dbReference type="GO" id="GO:0055085">
    <property type="term" value="P:transmembrane transport"/>
    <property type="evidence" value="ECO:0007669"/>
    <property type="project" value="InterPro"/>
</dbReference>
<dbReference type="HAMAP" id="MF_00462">
    <property type="entry name" value="RsxD_RnfD"/>
    <property type="match status" value="1"/>
</dbReference>
<dbReference type="InterPro" id="IPR004338">
    <property type="entry name" value="NqrB/RnfD"/>
</dbReference>
<dbReference type="InterPro" id="IPR011303">
    <property type="entry name" value="RnfD_bac"/>
</dbReference>
<dbReference type="NCBIfam" id="TIGR01946">
    <property type="entry name" value="rnfD"/>
    <property type="match status" value="1"/>
</dbReference>
<dbReference type="PANTHER" id="PTHR30578">
    <property type="entry name" value="ELECTRON TRANSPORT COMPLEX PROTEIN RNFD"/>
    <property type="match status" value="1"/>
</dbReference>
<dbReference type="PANTHER" id="PTHR30578:SF0">
    <property type="entry name" value="ION-TRANSLOCATING OXIDOREDUCTASE COMPLEX SUBUNIT D"/>
    <property type="match status" value="1"/>
</dbReference>
<dbReference type="Pfam" id="PF03116">
    <property type="entry name" value="NQR2_RnfD_RnfE"/>
    <property type="match status" value="1"/>
</dbReference>
<organism>
    <name type="scientific">Rhodobacter capsulatus</name>
    <name type="common">Rhodopseudomonas capsulata</name>
    <dbReference type="NCBI Taxonomy" id="1061"/>
    <lineage>
        <taxon>Bacteria</taxon>
        <taxon>Pseudomonadati</taxon>
        <taxon>Pseudomonadota</taxon>
        <taxon>Alphaproteobacteria</taxon>
        <taxon>Rhodobacterales</taxon>
        <taxon>Rhodobacter group</taxon>
        <taxon>Rhodobacter</taxon>
    </lineage>
</organism>
<feature type="chain" id="PRO_0000074460" description="Ion-translocating oxidoreductase complex subunit D">
    <location>
        <begin position="1"/>
        <end position="358"/>
    </location>
</feature>
<feature type="transmembrane region" description="Helical" evidence="1">
    <location>
        <begin position="16"/>
        <end position="36"/>
    </location>
</feature>
<feature type="transmembrane region" description="Helical" evidence="1">
    <location>
        <begin position="38"/>
        <end position="58"/>
    </location>
</feature>
<feature type="transmembrane region" description="Helical" evidence="1">
    <location>
        <begin position="68"/>
        <end position="90"/>
    </location>
</feature>
<feature type="transmembrane region" description="Helical" evidence="1">
    <location>
        <begin position="128"/>
        <end position="148"/>
    </location>
</feature>
<feature type="transmembrane region" description="Helical" evidence="1">
    <location>
        <begin position="206"/>
        <end position="226"/>
    </location>
</feature>
<feature type="transmembrane region" description="Helical" evidence="1">
    <location>
        <begin position="236"/>
        <end position="256"/>
    </location>
</feature>
<feature type="transmembrane region" description="Helical" evidence="1">
    <location>
        <begin position="286"/>
        <end position="306"/>
    </location>
</feature>
<feature type="sequence conflict" description="In Ref. 1; CAA51398." evidence="5" ref="1">
    <original>L</original>
    <variation>V</variation>
    <location>
        <position position="27"/>
    </location>
</feature>
<feature type="sequence conflict" description="In Ref. 1; CAA51398." evidence="5" ref="1">
    <original>D</original>
    <variation>H</variation>
    <location>
        <position position="65"/>
    </location>
</feature>
<feature type="sequence conflict" description="In Ref. 1; CAA51398." evidence="5" ref="1">
    <original>A</original>
    <variation>P</variation>
    <location>
        <position position="72"/>
    </location>
</feature>
<feature type="sequence conflict" description="In Ref. 1; CAA51398." evidence="5" ref="1">
    <original>GPSFLHGL</original>
    <variation>A</variation>
    <location>
        <begin position="150"/>
        <end position="157"/>
    </location>
</feature>
<feature type="sequence conflict" description="In Ref. 1; CAA51398." evidence="5" ref="1">
    <original>FLGSQEFDAVSSASTLSHIKSQISAGATMGE</original>
    <variation>LFGSHVPAQLAHQEQISRATWQ</variation>
    <location>
        <begin position="161"/>
        <end position="191"/>
    </location>
</feature>
<feature type="sequence conflict" description="In Ref. 1; CAA51398." evidence="5" ref="1">
    <original>TLADLESRLLGFVPGSLGETSTVLLALGGLL</original>
    <variation>SWRIWKAVFWASCPAAWRDLDRASGTGRGFW</variation>
    <location>
        <begin position="195"/>
        <end position="225"/>
    </location>
</feature>
<feature type="sequence conflict" description="In Ref. 1; CAA51398." evidence="5" ref="1">
    <original>AV</original>
    <variation>GL</variation>
    <location>
        <begin position="239"/>
        <end position="240"/>
    </location>
</feature>
<feature type="sequence conflict" description="In Ref. 1; CAA51398." evidence="5" ref="1">
    <original>VTLSAIC</original>
    <variation>SRCRRSV</variation>
    <location>
        <begin position="245"/>
        <end position="251"/>
    </location>
</feature>
<feature type="sequence conflict" description="In Ref. 1; CAA51398." evidence="5" ref="1">
    <original>R</original>
    <variation>P</variation>
    <location>
        <position position="258"/>
    </location>
</feature>
<feature type="sequence conflict" description="In Ref. 1; CAA51398." evidence="5" ref="1">
    <original>GRGLCGALDELGHAPDRNLHPAADLRTVPHRQAACAAKPAKGAQK</original>
    <variation>AWPLRCS</variation>
    <location>
        <begin position="314"/>
        <end position="358"/>
    </location>
</feature>
<protein>
    <recommendedName>
        <fullName evidence="1 5">Ion-translocating oxidoreductase complex subunit D</fullName>
        <ecNumber evidence="1 5">7.-.-.-</ecNumber>
    </recommendedName>
    <alternativeName>
        <fullName evidence="5">Nitrogen fixation protein RnfD</fullName>
    </alternativeName>
    <alternativeName>
        <fullName evidence="1 5">Rnf electron transport complex subunit D</fullName>
    </alternativeName>
</protein>
<reference key="1">
    <citation type="journal article" date="1993" name="Mol. Gen. Genet.">
        <title>Identification of a new class of nitrogen fixation genes in Rhodobacter capsulatus: a putative membrane complex involved in electron transport to nitrogenase.</title>
        <authorList>
            <person name="Schmehl M."/>
            <person name="Jahn A."/>
            <person name="Meyer zu Vilsendorf A."/>
            <person name="Hennecke S."/>
            <person name="Masepohl B."/>
            <person name="Schuppler M."/>
            <person name="Marxer M."/>
            <person name="Oelze J."/>
            <person name="Klipp W."/>
        </authorList>
    </citation>
    <scope>NUCLEOTIDE SEQUENCE [GENOMIC DNA]</scope>
    <scope>FUNCTION</scope>
    <scope>GENE NAME</scope>
    <source>
        <strain>B10S</strain>
    </source>
</reference>
<reference key="2">
    <citation type="journal article" date="1998" name="Eur. J. Biochem.">
        <title>Overexpression in Escherichia coli of the rnf genes from Rhodobacter capsulatus -- characterization of two membrane-bound iron-sulfur proteins.</title>
        <authorList>
            <person name="Jouanneau Y."/>
            <person name="Jeong H.-S."/>
            <person name="Hugo N."/>
            <person name="Meyer C."/>
            <person name="Willison J.C."/>
        </authorList>
    </citation>
    <scope>NUCLEOTIDE SEQUENCE [GENOMIC DNA]</scope>
    <scope>SUBUNIT</scope>
    <scope>INDUCTION</scope>
    <source>
        <strain>ATCC 33303 / B10</strain>
    </source>
</reference>
<evidence type="ECO:0000255" key="1">
    <source>
        <dbReference type="HAMAP-Rule" id="MF_00462"/>
    </source>
</evidence>
<evidence type="ECO:0000269" key="2">
    <source>
    </source>
</evidence>
<evidence type="ECO:0000269" key="3">
    <source>
    </source>
</evidence>
<evidence type="ECO:0000303" key="4">
    <source>
    </source>
</evidence>
<evidence type="ECO:0000305" key="5"/>
<evidence type="ECO:0000305" key="6">
    <source>
    </source>
</evidence>